<dbReference type="EC" id="3.1.1.29" evidence="1"/>
<dbReference type="EMBL" id="BA000004">
    <property type="protein sequence ID" value="BAB03787.1"/>
    <property type="molecule type" value="Genomic_DNA"/>
</dbReference>
<dbReference type="PIR" id="D83658">
    <property type="entry name" value="D83658"/>
</dbReference>
<dbReference type="RefSeq" id="WP_010896252.1">
    <property type="nucleotide sequence ID" value="NC_002570.2"/>
</dbReference>
<dbReference type="SMR" id="Q9KGJ3"/>
<dbReference type="STRING" id="272558.gene:10725890"/>
<dbReference type="GeneID" id="87595591"/>
<dbReference type="KEGG" id="bha:BH0068"/>
<dbReference type="eggNOG" id="COG0193">
    <property type="taxonomic scope" value="Bacteria"/>
</dbReference>
<dbReference type="HOGENOM" id="CLU_062456_4_1_9"/>
<dbReference type="OrthoDB" id="9800507at2"/>
<dbReference type="Proteomes" id="UP000001258">
    <property type="component" value="Chromosome"/>
</dbReference>
<dbReference type="GO" id="GO:0005737">
    <property type="term" value="C:cytoplasm"/>
    <property type="evidence" value="ECO:0007669"/>
    <property type="project" value="UniProtKB-SubCell"/>
</dbReference>
<dbReference type="GO" id="GO:0004045">
    <property type="term" value="F:peptidyl-tRNA hydrolase activity"/>
    <property type="evidence" value="ECO:0007669"/>
    <property type="project" value="UniProtKB-UniRule"/>
</dbReference>
<dbReference type="GO" id="GO:0000049">
    <property type="term" value="F:tRNA binding"/>
    <property type="evidence" value="ECO:0007669"/>
    <property type="project" value="UniProtKB-UniRule"/>
</dbReference>
<dbReference type="GO" id="GO:0006515">
    <property type="term" value="P:protein quality control for misfolded or incompletely synthesized proteins"/>
    <property type="evidence" value="ECO:0007669"/>
    <property type="project" value="UniProtKB-UniRule"/>
</dbReference>
<dbReference type="GO" id="GO:0072344">
    <property type="term" value="P:rescue of stalled ribosome"/>
    <property type="evidence" value="ECO:0007669"/>
    <property type="project" value="UniProtKB-UniRule"/>
</dbReference>
<dbReference type="CDD" id="cd00462">
    <property type="entry name" value="PTH"/>
    <property type="match status" value="1"/>
</dbReference>
<dbReference type="FunFam" id="3.40.50.1470:FF:000001">
    <property type="entry name" value="Peptidyl-tRNA hydrolase"/>
    <property type="match status" value="1"/>
</dbReference>
<dbReference type="Gene3D" id="3.40.50.1470">
    <property type="entry name" value="Peptidyl-tRNA hydrolase"/>
    <property type="match status" value="1"/>
</dbReference>
<dbReference type="HAMAP" id="MF_00083">
    <property type="entry name" value="Pept_tRNA_hydro_bact"/>
    <property type="match status" value="1"/>
</dbReference>
<dbReference type="InterPro" id="IPR001328">
    <property type="entry name" value="Pept_tRNA_hydro"/>
</dbReference>
<dbReference type="InterPro" id="IPR018171">
    <property type="entry name" value="Pept_tRNA_hydro_CS"/>
</dbReference>
<dbReference type="InterPro" id="IPR036416">
    <property type="entry name" value="Pept_tRNA_hydro_sf"/>
</dbReference>
<dbReference type="NCBIfam" id="TIGR00447">
    <property type="entry name" value="pth"/>
    <property type="match status" value="1"/>
</dbReference>
<dbReference type="PANTHER" id="PTHR17224">
    <property type="entry name" value="PEPTIDYL-TRNA HYDROLASE"/>
    <property type="match status" value="1"/>
</dbReference>
<dbReference type="PANTHER" id="PTHR17224:SF1">
    <property type="entry name" value="PEPTIDYL-TRNA HYDROLASE"/>
    <property type="match status" value="1"/>
</dbReference>
<dbReference type="Pfam" id="PF01195">
    <property type="entry name" value="Pept_tRNA_hydro"/>
    <property type="match status" value="1"/>
</dbReference>
<dbReference type="SUPFAM" id="SSF53178">
    <property type="entry name" value="Peptidyl-tRNA hydrolase-like"/>
    <property type="match status" value="1"/>
</dbReference>
<dbReference type="PROSITE" id="PS01195">
    <property type="entry name" value="PEPT_TRNA_HYDROL_1"/>
    <property type="match status" value="1"/>
</dbReference>
<dbReference type="PROSITE" id="PS01196">
    <property type="entry name" value="PEPT_TRNA_HYDROL_2"/>
    <property type="match status" value="1"/>
</dbReference>
<name>PTH_HALH5</name>
<reference key="1">
    <citation type="journal article" date="2000" name="Nucleic Acids Res.">
        <title>Complete genome sequence of the alkaliphilic bacterium Bacillus halodurans and genomic sequence comparison with Bacillus subtilis.</title>
        <authorList>
            <person name="Takami H."/>
            <person name="Nakasone K."/>
            <person name="Takaki Y."/>
            <person name="Maeno G."/>
            <person name="Sasaki R."/>
            <person name="Masui N."/>
            <person name="Fuji F."/>
            <person name="Hirama C."/>
            <person name="Nakamura Y."/>
            <person name="Ogasawara N."/>
            <person name="Kuhara S."/>
            <person name="Horikoshi K."/>
        </authorList>
    </citation>
    <scope>NUCLEOTIDE SEQUENCE [LARGE SCALE GENOMIC DNA]</scope>
    <source>
        <strain>ATCC BAA-125 / DSM 18197 / FERM 7344 / JCM 9153 / C-125</strain>
    </source>
</reference>
<comment type="function">
    <text evidence="1">Hydrolyzes ribosome-free peptidyl-tRNAs (with 1 or more amino acids incorporated), which drop off the ribosome during protein synthesis, or as a result of ribosome stalling.</text>
</comment>
<comment type="function">
    <text evidence="1">Catalyzes the release of premature peptidyl moieties from peptidyl-tRNA molecules trapped in stalled 50S ribosomal subunits, and thus maintains levels of free tRNAs and 50S ribosomes.</text>
</comment>
<comment type="catalytic activity">
    <reaction evidence="1">
        <text>an N-acyl-L-alpha-aminoacyl-tRNA + H2O = an N-acyl-L-amino acid + a tRNA + H(+)</text>
        <dbReference type="Rhea" id="RHEA:54448"/>
        <dbReference type="Rhea" id="RHEA-COMP:10123"/>
        <dbReference type="Rhea" id="RHEA-COMP:13883"/>
        <dbReference type="ChEBI" id="CHEBI:15377"/>
        <dbReference type="ChEBI" id="CHEBI:15378"/>
        <dbReference type="ChEBI" id="CHEBI:59874"/>
        <dbReference type="ChEBI" id="CHEBI:78442"/>
        <dbReference type="ChEBI" id="CHEBI:138191"/>
        <dbReference type="EC" id="3.1.1.29"/>
    </reaction>
</comment>
<comment type="subunit">
    <text evidence="1">Monomer.</text>
</comment>
<comment type="subcellular location">
    <subcellularLocation>
        <location evidence="1">Cytoplasm</location>
    </subcellularLocation>
</comment>
<comment type="similarity">
    <text evidence="1">Belongs to the PTH family.</text>
</comment>
<evidence type="ECO:0000255" key="1">
    <source>
        <dbReference type="HAMAP-Rule" id="MF_00083"/>
    </source>
</evidence>
<feature type="chain" id="PRO_0000187688" description="Peptidyl-tRNA hydrolase">
    <location>
        <begin position="1"/>
        <end position="185"/>
    </location>
</feature>
<feature type="active site" description="Proton acceptor" evidence="1">
    <location>
        <position position="19"/>
    </location>
</feature>
<feature type="binding site" evidence="1">
    <location>
        <position position="14"/>
    </location>
    <ligand>
        <name>tRNA</name>
        <dbReference type="ChEBI" id="CHEBI:17843"/>
    </ligand>
</feature>
<feature type="binding site" evidence="1">
    <location>
        <position position="64"/>
    </location>
    <ligand>
        <name>tRNA</name>
        <dbReference type="ChEBI" id="CHEBI:17843"/>
    </ligand>
</feature>
<feature type="binding site" evidence="1">
    <location>
        <position position="66"/>
    </location>
    <ligand>
        <name>tRNA</name>
        <dbReference type="ChEBI" id="CHEBI:17843"/>
    </ligand>
</feature>
<feature type="binding site" evidence="1">
    <location>
        <position position="112"/>
    </location>
    <ligand>
        <name>tRNA</name>
        <dbReference type="ChEBI" id="CHEBI:17843"/>
    </ligand>
</feature>
<feature type="site" description="Discriminates between blocked and unblocked aminoacyl-tRNA" evidence="1">
    <location>
        <position position="9"/>
    </location>
</feature>
<feature type="site" description="Stabilizes the basic form of H active site to accept a proton" evidence="1">
    <location>
        <position position="91"/>
    </location>
</feature>
<sequence length="185" mass="20548">MKLIVGLGNPGAKYDGTRHNVGFDVVDAVARRLNIEIKQSKANGLYGEGRIDGEKIFLLKPQTFMNRSGESVRPFLEYYNMEVEDLLVIYDDLDLPVGKIRLRQKGSAGGHNGMKSLIAHLGTSDFKRIRVGVDRPAPGETVVQHVLGRYRPEEKDAISEAIDLSAEAAEAFTKKPFLEVMNTFN</sequence>
<organism>
    <name type="scientific">Halalkalibacterium halodurans (strain ATCC BAA-125 / DSM 18197 / FERM 7344 / JCM 9153 / C-125)</name>
    <name type="common">Bacillus halodurans</name>
    <dbReference type="NCBI Taxonomy" id="272558"/>
    <lineage>
        <taxon>Bacteria</taxon>
        <taxon>Bacillati</taxon>
        <taxon>Bacillota</taxon>
        <taxon>Bacilli</taxon>
        <taxon>Bacillales</taxon>
        <taxon>Bacillaceae</taxon>
        <taxon>Halalkalibacterium (ex Joshi et al. 2022)</taxon>
    </lineage>
</organism>
<gene>
    <name evidence="1" type="primary">pth</name>
    <name type="synonym">spoVC</name>
    <name type="ordered locus">BH0068</name>
</gene>
<keyword id="KW-0963">Cytoplasm</keyword>
<keyword id="KW-0378">Hydrolase</keyword>
<keyword id="KW-1185">Reference proteome</keyword>
<keyword id="KW-0694">RNA-binding</keyword>
<keyword id="KW-0820">tRNA-binding</keyword>
<accession>Q9KGJ3</accession>
<proteinExistence type="inferred from homology"/>
<protein>
    <recommendedName>
        <fullName evidence="1">Peptidyl-tRNA hydrolase</fullName>
        <shortName evidence="1">Pth</shortName>
        <ecNumber evidence="1">3.1.1.29</ecNumber>
    </recommendedName>
</protein>